<organism>
    <name type="scientific">Rattus norvegicus</name>
    <name type="common">Rat</name>
    <dbReference type="NCBI Taxonomy" id="10116"/>
    <lineage>
        <taxon>Eukaryota</taxon>
        <taxon>Metazoa</taxon>
        <taxon>Chordata</taxon>
        <taxon>Craniata</taxon>
        <taxon>Vertebrata</taxon>
        <taxon>Euteleostomi</taxon>
        <taxon>Mammalia</taxon>
        <taxon>Eutheria</taxon>
        <taxon>Euarchontoglires</taxon>
        <taxon>Glires</taxon>
        <taxon>Rodentia</taxon>
        <taxon>Myomorpha</taxon>
        <taxon>Muroidea</taxon>
        <taxon>Muridae</taxon>
        <taxon>Murinae</taxon>
        <taxon>Rattus</taxon>
    </lineage>
</organism>
<comment type="subcellular location">
    <subcellularLocation>
        <location evidence="1">Secreted</location>
    </subcellularLocation>
</comment>
<comment type="similarity">
    <text evidence="3">Belongs to the peptidase S1 family.</text>
</comment>
<accession>Q6BEA2</accession>
<protein>
    <recommendedName>
        <fullName>Serine protease 27</fullName>
        <ecNumber>3.4.21.-</ecNumber>
    </recommendedName>
    <alternativeName>
        <fullName>Marapsin</fullName>
    </alternativeName>
    <alternativeName>
        <fullName>Pancreasin</fullName>
    </alternativeName>
</protein>
<name>PRS27_RAT</name>
<dbReference type="EC" id="3.4.21.-"/>
<dbReference type="EMBL" id="AB101677">
    <property type="protein sequence ID" value="BAC81507.1"/>
    <property type="molecule type" value="mRNA"/>
</dbReference>
<dbReference type="RefSeq" id="NP_891994.3">
    <property type="nucleotide sequence ID" value="NM_182949.3"/>
</dbReference>
<dbReference type="SMR" id="Q6BEA2"/>
<dbReference type="FunCoup" id="Q6BEA2">
    <property type="interactions" value="35"/>
</dbReference>
<dbReference type="STRING" id="10116.ENSRNOP00000007392"/>
<dbReference type="MEROPS" id="S01.074"/>
<dbReference type="GlyCosmos" id="Q6BEA2">
    <property type="glycosylation" value="1 site, No reported glycans"/>
</dbReference>
<dbReference type="GlyGen" id="Q6BEA2">
    <property type="glycosylation" value="1 site"/>
</dbReference>
<dbReference type="PhosphoSitePlus" id="Q6BEA2"/>
<dbReference type="PaxDb" id="10116-ENSRNOP00000007392"/>
<dbReference type="Ensembl" id="ENSRNOT00000007392.6">
    <property type="protein sequence ID" value="ENSRNOP00000007392.3"/>
    <property type="gene ID" value="ENSRNOG00000005336.8"/>
</dbReference>
<dbReference type="GeneID" id="287108"/>
<dbReference type="KEGG" id="rno:287108"/>
<dbReference type="UCSC" id="RGD:1303256">
    <property type="organism name" value="rat"/>
</dbReference>
<dbReference type="AGR" id="RGD:1303256"/>
<dbReference type="CTD" id="83886"/>
<dbReference type="RGD" id="1303256">
    <property type="gene designation" value="Prss27"/>
</dbReference>
<dbReference type="eggNOG" id="KOG3627">
    <property type="taxonomic scope" value="Eukaryota"/>
</dbReference>
<dbReference type="GeneTree" id="ENSGT00940000162015"/>
<dbReference type="InParanoid" id="Q6BEA2"/>
<dbReference type="OMA" id="PVCMPDP"/>
<dbReference type="OrthoDB" id="546450at2759"/>
<dbReference type="PhylomeDB" id="Q6BEA2"/>
<dbReference type="TreeFam" id="TF351676"/>
<dbReference type="PRO" id="PR:Q6BEA2"/>
<dbReference type="Proteomes" id="UP000002494">
    <property type="component" value="Chromosome 10"/>
</dbReference>
<dbReference type="Bgee" id="ENSRNOG00000005336">
    <property type="expression patterns" value="Expressed in esophagus and 3 other cell types or tissues"/>
</dbReference>
<dbReference type="ExpressionAtlas" id="Q6BEA2">
    <property type="expression patterns" value="baseline and differential"/>
</dbReference>
<dbReference type="GO" id="GO:0005576">
    <property type="term" value="C:extracellular region"/>
    <property type="evidence" value="ECO:0007669"/>
    <property type="project" value="UniProtKB-SubCell"/>
</dbReference>
<dbReference type="GO" id="GO:0005886">
    <property type="term" value="C:plasma membrane"/>
    <property type="evidence" value="ECO:0000266"/>
    <property type="project" value="RGD"/>
</dbReference>
<dbReference type="GO" id="GO:0004252">
    <property type="term" value="F:serine-type endopeptidase activity"/>
    <property type="evidence" value="ECO:0007669"/>
    <property type="project" value="InterPro"/>
</dbReference>
<dbReference type="GO" id="GO:0006508">
    <property type="term" value="P:proteolysis"/>
    <property type="evidence" value="ECO:0007669"/>
    <property type="project" value="UniProtKB-KW"/>
</dbReference>
<dbReference type="CDD" id="cd00190">
    <property type="entry name" value="Tryp_SPc"/>
    <property type="match status" value="1"/>
</dbReference>
<dbReference type="FunFam" id="2.40.10.10:FF:000039">
    <property type="entry name" value="Brain-specific serine protease 4"/>
    <property type="match status" value="1"/>
</dbReference>
<dbReference type="Gene3D" id="2.40.10.10">
    <property type="entry name" value="Trypsin-like serine proteases"/>
    <property type="match status" value="2"/>
</dbReference>
<dbReference type="InterPro" id="IPR009003">
    <property type="entry name" value="Peptidase_S1_PA"/>
</dbReference>
<dbReference type="InterPro" id="IPR043504">
    <property type="entry name" value="Peptidase_S1_PA_chymotrypsin"/>
</dbReference>
<dbReference type="InterPro" id="IPR001314">
    <property type="entry name" value="Peptidase_S1A"/>
</dbReference>
<dbReference type="InterPro" id="IPR001254">
    <property type="entry name" value="Trypsin_dom"/>
</dbReference>
<dbReference type="InterPro" id="IPR018114">
    <property type="entry name" value="TRYPSIN_HIS"/>
</dbReference>
<dbReference type="InterPro" id="IPR033116">
    <property type="entry name" value="TRYPSIN_SER"/>
</dbReference>
<dbReference type="PANTHER" id="PTHR24253:SF119">
    <property type="entry name" value="SERINE PROTEASE 27"/>
    <property type="match status" value="1"/>
</dbReference>
<dbReference type="PANTHER" id="PTHR24253">
    <property type="entry name" value="TRANSMEMBRANE PROTEASE SERINE"/>
    <property type="match status" value="1"/>
</dbReference>
<dbReference type="Pfam" id="PF00089">
    <property type="entry name" value="Trypsin"/>
    <property type="match status" value="1"/>
</dbReference>
<dbReference type="PRINTS" id="PR00722">
    <property type="entry name" value="CHYMOTRYPSIN"/>
</dbReference>
<dbReference type="SMART" id="SM00020">
    <property type="entry name" value="Tryp_SPc"/>
    <property type="match status" value="1"/>
</dbReference>
<dbReference type="SUPFAM" id="SSF50494">
    <property type="entry name" value="Trypsin-like serine proteases"/>
    <property type="match status" value="1"/>
</dbReference>
<dbReference type="PROSITE" id="PS50240">
    <property type="entry name" value="TRYPSIN_DOM"/>
    <property type="match status" value="1"/>
</dbReference>
<dbReference type="PROSITE" id="PS00134">
    <property type="entry name" value="TRYPSIN_HIS"/>
    <property type="match status" value="1"/>
</dbReference>
<dbReference type="PROSITE" id="PS00135">
    <property type="entry name" value="TRYPSIN_SER"/>
    <property type="match status" value="1"/>
</dbReference>
<sequence>MRQPHITALLLLPLLLRSGTEGAEAMRACGHPRMFNRMVGGEDALEGEWPWQVSIQRNGAHFCGGSLIAPTWVLTAAHCFSNTSDISIYQVLLGALKLQQPGPHALYVPVKRVKSHPEYQGMASSADVALVELQVPVTFTKYILPVCLPDPSVVFKSGMNCWVTGWGSPSEQDRLPNPRILQKLAVPLIDTPKCNLLYSKDAEADIQLKTIKDDMLCAGFAEGKKDACKGDSGGPLVCLVDQSWVQAGVISWGEGCARRNRPGVYIRVASHYQWIHQIIPELQFQGRAGSQQQQRDPRGWQPLAENSAPCLAAHAVLLALGALMLGIL</sequence>
<evidence type="ECO:0000250" key="1"/>
<evidence type="ECO:0000255" key="2"/>
<evidence type="ECO:0000255" key="3">
    <source>
        <dbReference type="PROSITE-ProRule" id="PRU00274"/>
    </source>
</evidence>
<proteinExistence type="evidence at transcript level"/>
<reference key="1">
    <citation type="submission" date="2003-02" db="EMBL/GenBank/DDBJ databases">
        <title>Comprehensive analysis of gene expression of rat corneal epithelium and limbal epithelium.</title>
        <authorList>
            <person name="Adachi W."/>
            <person name="Norman B."/>
            <person name="Davis J."/>
            <person name="Piatigorsky J."/>
        </authorList>
    </citation>
    <scope>NUCLEOTIDE SEQUENCE [MRNA]</scope>
    <source>
        <strain>Wistar</strain>
        <tissue>Limbal epithelium</tissue>
    </source>
</reference>
<gene>
    <name type="primary">Prss27</name>
    <name type="synonym">Mpn</name>
</gene>
<keyword id="KW-1015">Disulfide bond</keyword>
<keyword id="KW-0325">Glycoprotein</keyword>
<keyword id="KW-0378">Hydrolase</keyword>
<keyword id="KW-0645">Protease</keyword>
<keyword id="KW-1185">Reference proteome</keyword>
<keyword id="KW-0964">Secreted</keyword>
<keyword id="KW-0720">Serine protease</keyword>
<keyword id="KW-0732">Signal</keyword>
<keyword id="KW-0865">Zymogen</keyword>
<feature type="signal peptide" evidence="2">
    <location>
        <begin position="1"/>
        <end position="22"/>
    </location>
</feature>
<feature type="propeptide" id="PRO_0000027510" description="Activation peptide" evidence="2">
    <location>
        <begin position="23"/>
        <end position="37"/>
    </location>
</feature>
<feature type="chain" id="PRO_0000027511" description="Serine protease 27">
    <location>
        <begin position="38"/>
        <end position="328"/>
    </location>
</feature>
<feature type="domain" description="Peptidase S1" evidence="3">
    <location>
        <begin position="38"/>
        <end position="280"/>
    </location>
</feature>
<feature type="active site" description="Charge relay system" evidence="1">
    <location>
        <position position="78"/>
    </location>
</feature>
<feature type="active site" description="Charge relay system" evidence="1">
    <location>
        <position position="127"/>
    </location>
</feature>
<feature type="active site" description="Charge relay system" evidence="1">
    <location>
        <position position="232"/>
    </location>
</feature>
<feature type="glycosylation site" description="N-linked (GlcNAc...) asparagine" evidence="2">
    <location>
        <position position="82"/>
    </location>
</feature>
<feature type="disulfide bond" evidence="3">
    <location>
        <begin position="63"/>
        <end position="79"/>
    </location>
</feature>
<feature type="disulfide bond" evidence="3">
    <location>
        <begin position="161"/>
        <end position="238"/>
    </location>
</feature>
<feature type="disulfide bond" evidence="3">
    <location>
        <begin position="194"/>
        <end position="217"/>
    </location>
</feature>
<feature type="disulfide bond" evidence="3">
    <location>
        <begin position="228"/>
        <end position="256"/>
    </location>
</feature>